<dbReference type="EMBL" id="CP000633">
    <property type="protein sequence ID" value="ACM36339.1"/>
    <property type="molecule type" value="Genomic_DNA"/>
</dbReference>
<dbReference type="RefSeq" id="WP_015915760.1">
    <property type="nucleotide sequence ID" value="NC_011989.1"/>
</dbReference>
<dbReference type="SMR" id="B9JVQ9"/>
<dbReference type="STRING" id="311402.Avi_1865"/>
<dbReference type="KEGG" id="avi:Avi_1865"/>
<dbReference type="eggNOG" id="COG0099">
    <property type="taxonomic scope" value="Bacteria"/>
</dbReference>
<dbReference type="HOGENOM" id="CLU_103849_1_2_5"/>
<dbReference type="Proteomes" id="UP000001596">
    <property type="component" value="Chromosome 1"/>
</dbReference>
<dbReference type="GO" id="GO:0005829">
    <property type="term" value="C:cytosol"/>
    <property type="evidence" value="ECO:0007669"/>
    <property type="project" value="TreeGrafter"/>
</dbReference>
<dbReference type="GO" id="GO:0015935">
    <property type="term" value="C:small ribosomal subunit"/>
    <property type="evidence" value="ECO:0007669"/>
    <property type="project" value="TreeGrafter"/>
</dbReference>
<dbReference type="GO" id="GO:0019843">
    <property type="term" value="F:rRNA binding"/>
    <property type="evidence" value="ECO:0007669"/>
    <property type="project" value="UniProtKB-UniRule"/>
</dbReference>
<dbReference type="GO" id="GO:0003735">
    <property type="term" value="F:structural constituent of ribosome"/>
    <property type="evidence" value="ECO:0007669"/>
    <property type="project" value="InterPro"/>
</dbReference>
<dbReference type="GO" id="GO:0000049">
    <property type="term" value="F:tRNA binding"/>
    <property type="evidence" value="ECO:0007669"/>
    <property type="project" value="UniProtKB-UniRule"/>
</dbReference>
<dbReference type="GO" id="GO:0006412">
    <property type="term" value="P:translation"/>
    <property type="evidence" value="ECO:0007669"/>
    <property type="project" value="UniProtKB-UniRule"/>
</dbReference>
<dbReference type="FunFam" id="1.10.8.50:FF:000001">
    <property type="entry name" value="30S ribosomal protein S13"/>
    <property type="match status" value="1"/>
</dbReference>
<dbReference type="FunFam" id="4.10.910.10:FF:000001">
    <property type="entry name" value="30S ribosomal protein S13"/>
    <property type="match status" value="1"/>
</dbReference>
<dbReference type="Gene3D" id="1.10.8.50">
    <property type="match status" value="1"/>
</dbReference>
<dbReference type="Gene3D" id="4.10.910.10">
    <property type="entry name" value="30s ribosomal protein s13, domain 2"/>
    <property type="match status" value="1"/>
</dbReference>
<dbReference type="HAMAP" id="MF_01315">
    <property type="entry name" value="Ribosomal_uS13"/>
    <property type="match status" value="1"/>
</dbReference>
<dbReference type="InterPro" id="IPR027437">
    <property type="entry name" value="Rbsml_uS13_C"/>
</dbReference>
<dbReference type="InterPro" id="IPR001892">
    <property type="entry name" value="Ribosomal_uS13"/>
</dbReference>
<dbReference type="InterPro" id="IPR010979">
    <property type="entry name" value="Ribosomal_uS13-like_H2TH"/>
</dbReference>
<dbReference type="InterPro" id="IPR019980">
    <property type="entry name" value="Ribosomal_uS13_bac-type"/>
</dbReference>
<dbReference type="InterPro" id="IPR018269">
    <property type="entry name" value="Ribosomal_uS13_CS"/>
</dbReference>
<dbReference type="NCBIfam" id="TIGR03631">
    <property type="entry name" value="uS13_bact"/>
    <property type="match status" value="1"/>
</dbReference>
<dbReference type="PANTHER" id="PTHR10871">
    <property type="entry name" value="30S RIBOSOMAL PROTEIN S13/40S RIBOSOMAL PROTEIN S18"/>
    <property type="match status" value="1"/>
</dbReference>
<dbReference type="PANTHER" id="PTHR10871:SF1">
    <property type="entry name" value="SMALL RIBOSOMAL SUBUNIT PROTEIN US13M"/>
    <property type="match status" value="1"/>
</dbReference>
<dbReference type="Pfam" id="PF00416">
    <property type="entry name" value="Ribosomal_S13"/>
    <property type="match status" value="1"/>
</dbReference>
<dbReference type="PIRSF" id="PIRSF002134">
    <property type="entry name" value="Ribosomal_S13"/>
    <property type="match status" value="1"/>
</dbReference>
<dbReference type="SUPFAM" id="SSF46946">
    <property type="entry name" value="S13-like H2TH domain"/>
    <property type="match status" value="1"/>
</dbReference>
<dbReference type="PROSITE" id="PS00646">
    <property type="entry name" value="RIBOSOMAL_S13_1"/>
    <property type="match status" value="1"/>
</dbReference>
<dbReference type="PROSITE" id="PS50159">
    <property type="entry name" value="RIBOSOMAL_S13_2"/>
    <property type="match status" value="1"/>
</dbReference>
<proteinExistence type="inferred from homology"/>
<gene>
    <name evidence="1" type="primary">rpsM</name>
    <name type="ordered locus">Avi_1865</name>
</gene>
<sequence length="122" mass="13725">MARIAGVNIPTAKRVVIALTYIHGIGPKFAQEIMEKVGLSADRRVHQLTDAEVLAIRETIDRDYQVEGDLRRDTAMNIKRLMDLGCYRGLRHRRGLPVRGQRTHTNARTRKGPAKAIAGKKK</sequence>
<keyword id="KW-1185">Reference proteome</keyword>
<keyword id="KW-0687">Ribonucleoprotein</keyword>
<keyword id="KW-0689">Ribosomal protein</keyword>
<keyword id="KW-0694">RNA-binding</keyword>
<keyword id="KW-0699">rRNA-binding</keyword>
<keyword id="KW-0820">tRNA-binding</keyword>
<name>RS13_ALLAM</name>
<reference key="1">
    <citation type="journal article" date="2009" name="J. Bacteriol.">
        <title>Genome sequences of three Agrobacterium biovars help elucidate the evolution of multichromosome genomes in bacteria.</title>
        <authorList>
            <person name="Slater S.C."/>
            <person name="Goldman B.S."/>
            <person name="Goodner B."/>
            <person name="Setubal J.C."/>
            <person name="Farrand S.K."/>
            <person name="Nester E.W."/>
            <person name="Burr T.J."/>
            <person name="Banta L."/>
            <person name="Dickerman A.W."/>
            <person name="Paulsen I."/>
            <person name="Otten L."/>
            <person name="Suen G."/>
            <person name="Welch R."/>
            <person name="Almeida N.F."/>
            <person name="Arnold F."/>
            <person name="Burton O.T."/>
            <person name="Du Z."/>
            <person name="Ewing A."/>
            <person name="Godsy E."/>
            <person name="Heisel S."/>
            <person name="Houmiel K.L."/>
            <person name="Jhaveri J."/>
            <person name="Lu J."/>
            <person name="Miller N.M."/>
            <person name="Norton S."/>
            <person name="Chen Q."/>
            <person name="Phoolcharoen W."/>
            <person name="Ohlin V."/>
            <person name="Ondrusek D."/>
            <person name="Pride N."/>
            <person name="Stricklin S.L."/>
            <person name="Sun J."/>
            <person name="Wheeler C."/>
            <person name="Wilson L."/>
            <person name="Zhu H."/>
            <person name="Wood D.W."/>
        </authorList>
    </citation>
    <scope>NUCLEOTIDE SEQUENCE [LARGE SCALE GENOMIC DNA]</scope>
    <source>
        <strain>ATCC BAA-846 / DSM 112012 / S4</strain>
    </source>
</reference>
<accession>B9JVQ9</accession>
<feature type="chain" id="PRO_1000165593" description="Small ribosomal subunit protein uS13">
    <location>
        <begin position="1"/>
        <end position="122"/>
    </location>
</feature>
<feature type="region of interest" description="Disordered" evidence="2">
    <location>
        <begin position="99"/>
        <end position="122"/>
    </location>
</feature>
<comment type="function">
    <text evidence="1">Located at the top of the head of the 30S subunit, it contacts several helices of the 16S rRNA. In the 70S ribosome it contacts the 23S rRNA (bridge B1a) and protein L5 of the 50S subunit (bridge B1b), connecting the 2 subunits; these bridges are implicated in subunit movement. Contacts the tRNAs in the A and P-sites.</text>
</comment>
<comment type="subunit">
    <text evidence="1">Part of the 30S ribosomal subunit. Forms a loose heterodimer with protein S19. Forms two bridges to the 50S subunit in the 70S ribosome.</text>
</comment>
<comment type="similarity">
    <text evidence="1">Belongs to the universal ribosomal protein uS13 family.</text>
</comment>
<protein>
    <recommendedName>
        <fullName evidence="1">Small ribosomal subunit protein uS13</fullName>
    </recommendedName>
    <alternativeName>
        <fullName evidence="3">30S ribosomal protein S13</fullName>
    </alternativeName>
</protein>
<organism>
    <name type="scientific">Allorhizobium ampelinum (strain ATCC BAA-846 / DSM 112012 / S4)</name>
    <name type="common">Agrobacterium vitis (strain S4)</name>
    <dbReference type="NCBI Taxonomy" id="311402"/>
    <lineage>
        <taxon>Bacteria</taxon>
        <taxon>Pseudomonadati</taxon>
        <taxon>Pseudomonadota</taxon>
        <taxon>Alphaproteobacteria</taxon>
        <taxon>Hyphomicrobiales</taxon>
        <taxon>Rhizobiaceae</taxon>
        <taxon>Rhizobium/Agrobacterium group</taxon>
        <taxon>Allorhizobium</taxon>
        <taxon>Allorhizobium ampelinum</taxon>
    </lineage>
</organism>
<evidence type="ECO:0000255" key="1">
    <source>
        <dbReference type="HAMAP-Rule" id="MF_01315"/>
    </source>
</evidence>
<evidence type="ECO:0000256" key="2">
    <source>
        <dbReference type="SAM" id="MobiDB-lite"/>
    </source>
</evidence>
<evidence type="ECO:0000305" key="3"/>